<protein>
    <recommendedName>
        <fullName evidence="2">Probable cell division protein WhiA</fullName>
    </recommendedName>
</protein>
<evidence type="ECO:0000250" key="1">
    <source>
        <dbReference type="UniProtKB" id="P9WF45"/>
    </source>
</evidence>
<evidence type="ECO:0000255" key="2">
    <source>
        <dbReference type="HAMAP-Rule" id="MF_01420"/>
    </source>
</evidence>
<name>WHIA_NOCFA</name>
<sequence length="327" mass="35142">MAMTAEVKDELSRLTVSQVSSRKAELSALLRFAGGLHIVGGRVIVEAEVDMGSIARRLRREIFELYGYGSDVHVLGAGGLRKTSRYVVRVSKEGEALARQTGLLDVRGRPVRGLPAQVVGGSIADAEAAWRGAFLAHGSLTEPGRSSALEVSCPGPEAALALVGAARRLGITAKAREVRGTDRVVVRDGEAIGALLTRMGAQDTRLTWEERRMRREVRATANRLANFDDANLRRSARAAVAAAARVERALEILGEDVPDHLAAAGKLRVQHRQASLEELGQLADPPMTKDAVAGRIRRLLSMADRRARELGIPDTESAVTAELLDEA</sequence>
<feature type="chain" id="PRO_0000376539" description="Probable cell division protein WhiA">
    <location>
        <begin position="1"/>
        <end position="327"/>
    </location>
</feature>
<feature type="DNA-binding region" description="H-T-H motif" evidence="2">
    <location>
        <begin position="275"/>
        <end position="308"/>
    </location>
</feature>
<organism>
    <name type="scientific">Nocardia farcinica (strain IFM 10152)</name>
    <dbReference type="NCBI Taxonomy" id="247156"/>
    <lineage>
        <taxon>Bacteria</taxon>
        <taxon>Bacillati</taxon>
        <taxon>Actinomycetota</taxon>
        <taxon>Actinomycetes</taxon>
        <taxon>Mycobacteriales</taxon>
        <taxon>Nocardiaceae</taxon>
        <taxon>Nocardia</taxon>
    </lineage>
</organism>
<dbReference type="EMBL" id="AP006618">
    <property type="protein sequence ID" value="BAD58439.1"/>
    <property type="status" value="ALT_INIT"/>
    <property type="molecule type" value="Genomic_DNA"/>
</dbReference>
<dbReference type="SMR" id="Q5YTQ2"/>
<dbReference type="STRING" id="247156.NFA_35910"/>
<dbReference type="KEGG" id="nfa:NFA_35910"/>
<dbReference type="eggNOG" id="COG1481">
    <property type="taxonomic scope" value="Bacteria"/>
</dbReference>
<dbReference type="HOGENOM" id="CLU_053282_0_0_11"/>
<dbReference type="OrthoDB" id="5197218at2"/>
<dbReference type="Proteomes" id="UP000006820">
    <property type="component" value="Chromosome"/>
</dbReference>
<dbReference type="GO" id="GO:0003677">
    <property type="term" value="F:DNA binding"/>
    <property type="evidence" value="ECO:0007669"/>
    <property type="project" value="UniProtKB-UniRule"/>
</dbReference>
<dbReference type="GO" id="GO:0051301">
    <property type="term" value="P:cell division"/>
    <property type="evidence" value="ECO:0007669"/>
    <property type="project" value="UniProtKB-UniRule"/>
</dbReference>
<dbReference type="GO" id="GO:0043937">
    <property type="term" value="P:regulation of sporulation"/>
    <property type="evidence" value="ECO:0007669"/>
    <property type="project" value="InterPro"/>
</dbReference>
<dbReference type="FunFam" id="3.10.28.10:FF:000001">
    <property type="entry name" value="Probable cell division protein WhiA"/>
    <property type="match status" value="1"/>
</dbReference>
<dbReference type="Gene3D" id="3.10.28.10">
    <property type="entry name" value="Homing endonucleases"/>
    <property type="match status" value="1"/>
</dbReference>
<dbReference type="HAMAP" id="MF_01420">
    <property type="entry name" value="HTH_type_WhiA"/>
    <property type="match status" value="1"/>
</dbReference>
<dbReference type="InterPro" id="IPR027434">
    <property type="entry name" value="Homing_endonucl"/>
</dbReference>
<dbReference type="InterPro" id="IPR018478">
    <property type="entry name" value="Sporu_reg_WhiA_N_dom"/>
</dbReference>
<dbReference type="InterPro" id="IPR003802">
    <property type="entry name" value="Sporulation_regulator_WhiA"/>
</dbReference>
<dbReference type="InterPro" id="IPR023054">
    <property type="entry name" value="Sporulation_regulator_WhiA_C"/>
</dbReference>
<dbReference type="InterPro" id="IPR039518">
    <property type="entry name" value="WhiA_LAGLIDADG_dom"/>
</dbReference>
<dbReference type="NCBIfam" id="TIGR00647">
    <property type="entry name" value="DNA_bind_WhiA"/>
    <property type="match status" value="1"/>
</dbReference>
<dbReference type="PANTHER" id="PTHR37307">
    <property type="entry name" value="CELL DIVISION PROTEIN WHIA-RELATED"/>
    <property type="match status" value="1"/>
</dbReference>
<dbReference type="PANTHER" id="PTHR37307:SF1">
    <property type="entry name" value="CELL DIVISION PROTEIN WHIA-RELATED"/>
    <property type="match status" value="1"/>
</dbReference>
<dbReference type="Pfam" id="PF02650">
    <property type="entry name" value="HTH_WhiA"/>
    <property type="match status" value="1"/>
</dbReference>
<dbReference type="Pfam" id="PF14527">
    <property type="entry name" value="LAGLIDADG_WhiA"/>
    <property type="match status" value="1"/>
</dbReference>
<dbReference type="Pfam" id="PF10298">
    <property type="entry name" value="WhiA_N"/>
    <property type="match status" value="1"/>
</dbReference>
<comment type="function">
    <text evidence="2">Involved in cell division and chromosome segregation.</text>
</comment>
<comment type="similarity">
    <text evidence="2">Belongs to the WhiA family.</text>
</comment>
<comment type="sequence caution" evidence="1">
    <conflict type="erroneous initiation">
        <sequence resource="EMBL-CDS" id="BAD58439"/>
    </conflict>
    <text>Truncated N-terminus.</text>
</comment>
<proteinExistence type="inferred from homology"/>
<accession>Q5YTQ2</accession>
<reference key="1">
    <citation type="journal article" date="2004" name="Proc. Natl. Acad. Sci. U.S.A.">
        <title>The complete genomic sequence of Nocardia farcinica IFM 10152.</title>
        <authorList>
            <person name="Ishikawa J."/>
            <person name="Yamashita A."/>
            <person name="Mikami Y."/>
            <person name="Hoshino Y."/>
            <person name="Kurita H."/>
            <person name="Hotta K."/>
            <person name="Shiba T."/>
            <person name="Hattori M."/>
        </authorList>
    </citation>
    <scope>NUCLEOTIDE SEQUENCE [LARGE SCALE GENOMIC DNA]</scope>
    <source>
        <strain>IFM 10152</strain>
    </source>
</reference>
<keyword id="KW-0131">Cell cycle</keyword>
<keyword id="KW-0132">Cell division</keyword>
<keyword id="KW-0238">DNA-binding</keyword>
<keyword id="KW-1185">Reference proteome</keyword>
<gene>
    <name evidence="2" type="primary">whiA</name>
    <name type="ordered locus">NFA_35910</name>
</gene>